<protein>
    <recommendedName>
        <fullName evidence="4">Protein TIC 214</fullName>
    </recommendedName>
    <alternativeName>
        <fullName evidence="4">Translocon at the inner envelope membrane of chloroplasts 214</fullName>
        <shortName evidence="4">AtTIC214</shortName>
    </alternativeName>
</protein>
<gene>
    <name evidence="4" type="primary">TIC214</name>
    <name type="synonym">ycf1-A</name>
    <name evidence="6" type="ordered locus">AtCg01000</name>
</gene>
<gene>
    <name evidence="4" type="primary">TIC214</name>
    <name type="synonym">ycf1-B</name>
    <name evidence="7" type="ordered locus">AtCg01130</name>
</gene>
<reference key="1">
    <citation type="journal article" date="1999" name="DNA Res.">
        <title>Complete structure of the chloroplast genome of Arabidopsis thaliana.</title>
        <authorList>
            <person name="Sato S."/>
            <person name="Nakamura Y."/>
            <person name="Kaneko T."/>
            <person name="Asamizu E."/>
            <person name="Tabata S."/>
        </authorList>
    </citation>
    <scope>NUCLEOTIDE SEQUENCE [LARGE SCALE GENOMIC DNA]</scope>
    <source>
        <strain>cv. Columbia</strain>
    </source>
</reference>
<reference key="2">
    <citation type="journal article" date="2009" name="Plant Physiol.">
        <title>Large-scale Arabidopsis phosphoproteome profiling reveals novel chloroplast kinase substrates and phosphorylation networks.</title>
        <authorList>
            <person name="Reiland S."/>
            <person name="Messerli G."/>
            <person name="Baerenfaller K."/>
            <person name="Gerrits B."/>
            <person name="Endler A."/>
            <person name="Grossmann J."/>
            <person name="Gruissem W."/>
            <person name="Baginsky S."/>
        </authorList>
    </citation>
    <scope>IDENTIFICATION BY MASS SPECTROMETRY [LARGE SCALE ANALYSIS]</scope>
</reference>
<reference key="3">
    <citation type="journal article" date="2013" name="Science">
        <title>Uncovering the protein translocon at the chloroplast inner envelope membrane.</title>
        <authorList>
            <person name="Kikuchi S."/>
            <person name="Bedard J."/>
            <person name="Hirano M."/>
            <person name="Hirabayashi Y."/>
            <person name="Oishi M."/>
            <person name="Imai M."/>
            <person name="Takase M."/>
            <person name="Ide T."/>
            <person name="Nakai M."/>
        </authorList>
    </citation>
    <scope>FUNCTION</scope>
    <scope>COMPONENT OF THE 1-MD COMPLEX</scope>
    <scope>SUBUNIT</scope>
    <scope>IDENTIFICATION BY MASS SPECTROMETRY</scope>
    <scope>SUBCELLULAR LOCATION</scope>
</reference>
<evidence type="ECO:0000250" key="1">
    <source>
        <dbReference type="UniProtKB" id="Q8GZ79"/>
    </source>
</evidence>
<evidence type="ECO:0000255" key="2"/>
<evidence type="ECO:0000269" key="3">
    <source>
    </source>
</evidence>
<evidence type="ECO:0000303" key="4">
    <source>
    </source>
</evidence>
<evidence type="ECO:0000305" key="5"/>
<evidence type="ECO:0000312" key="6">
    <source>
        <dbReference type="Araport" id="ATCG01000"/>
    </source>
</evidence>
<evidence type="ECO:0000312" key="7">
    <source>
        <dbReference type="Araport" id="ATCG01130"/>
    </source>
</evidence>
<evidence type="ECO:0007829" key="8">
    <source>
        <dbReference type="PDB" id="8Z9Y"/>
    </source>
</evidence>
<accession>P56785</accession>
<accession>Q27GI0</accession>
<keyword id="KW-0002">3D-structure</keyword>
<keyword id="KW-0150">Chloroplast</keyword>
<keyword id="KW-0175">Coiled coil</keyword>
<keyword id="KW-0472">Membrane</keyword>
<keyword id="KW-0934">Plastid</keyword>
<keyword id="KW-1001">Plastid inner membrane</keyword>
<keyword id="KW-0653">Protein transport</keyword>
<keyword id="KW-1185">Reference proteome</keyword>
<keyword id="KW-0812">Transmembrane</keyword>
<keyword id="KW-1133">Transmembrane helix</keyword>
<keyword id="KW-0813">Transport</keyword>
<geneLocation type="chloroplast"/>
<organism>
    <name type="scientific">Arabidopsis thaliana</name>
    <name type="common">Mouse-ear cress</name>
    <dbReference type="NCBI Taxonomy" id="3702"/>
    <lineage>
        <taxon>Eukaryota</taxon>
        <taxon>Viridiplantae</taxon>
        <taxon>Streptophyta</taxon>
        <taxon>Embryophyta</taxon>
        <taxon>Tracheophyta</taxon>
        <taxon>Spermatophyta</taxon>
        <taxon>Magnoliopsida</taxon>
        <taxon>eudicotyledons</taxon>
        <taxon>Gunneridae</taxon>
        <taxon>Pentapetalae</taxon>
        <taxon>rosids</taxon>
        <taxon>malvids</taxon>
        <taxon>Brassicales</taxon>
        <taxon>Brassicaceae</taxon>
        <taxon>Camelineae</taxon>
        <taxon>Arabidopsis</taxon>
    </lineage>
</organism>
<feature type="chain" id="PRO_0000217297" description="Protein TIC 214">
    <location>
        <begin position="1"/>
        <end position="1786"/>
    </location>
</feature>
<feature type="transmembrane region" description="Helical; Name=1" evidence="2">
    <location>
        <begin position="19"/>
        <end position="39"/>
    </location>
</feature>
<feature type="transmembrane region" description="Helical; Name=2" evidence="2">
    <location>
        <begin position="68"/>
        <end position="88"/>
    </location>
</feature>
<feature type="transmembrane region" description="Helical; Name=3" evidence="2">
    <location>
        <begin position="91"/>
        <end position="111"/>
    </location>
</feature>
<feature type="transmembrane region" description="Helical; Name=4" evidence="2">
    <location>
        <begin position="133"/>
        <end position="153"/>
    </location>
</feature>
<feature type="transmembrane region" description="Helical; Name=5" evidence="2">
    <location>
        <begin position="176"/>
        <end position="196"/>
    </location>
</feature>
<feature type="transmembrane region" description="Helical; Name=6" evidence="2">
    <location>
        <begin position="227"/>
        <end position="247"/>
    </location>
</feature>
<feature type="coiled-coil region" evidence="2">
    <location>
        <begin position="1007"/>
        <end position="1046"/>
    </location>
</feature>
<feature type="turn" evidence="8">
    <location>
        <begin position="18"/>
        <end position="21"/>
    </location>
</feature>
<feature type="helix" evidence="8">
    <location>
        <begin position="23"/>
        <end position="32"/>
    </location>
</feature>
<feature type="helix" evidence="8">
    <location>
        <begin position="33"/>
        <end position="36"/>
    </location>
</feature>
<feature type="helix" evidence="8">
    <location>
        <begin position="40"/>
        <end position="42"/>
    </location>
</feature>
<feature type="helix" evidence="8">
    <location>
        <begin position="43"/>
        <end position="50"/>
    </location>
</feature>
<feature type="helix" evidence="8">
    <location>
        <begin position="56"/>
        <end position="77"/>
    </location>
</feature>
<feature type="turn" evidence="8">
    <location>
        <begin position="78"/>
        <end position="80"/>
    </location>
</feature>
<feature type="helix" evidence="8">
    <location>
        <begin position="82"/>
        <end position="87"/>
    </location>
</feature>
<feature type="helix" evidence="8">
    <location>
        <begin position="91"/>
        <end position="109"/>
    </location>
</feature>
<feature type="helix" evidence="8">
    <location>
        <begin position="127"/>
        <end position="140"/>
    </location>
</feature>
<feature type="helix" evidence="8">
    <location>
        <begin position="141"/>
        <end position="143"/>
    </location>
</feature>
<feature type="helix" evidence="8">
    <location>
        <begin position="152"/>
        <end position="163"/>
    </location>
</feature>
<feature type="helix" evidence="8">
    <location>
        <begin position="167"/>
        <end position="195"/>
    </location>
</feature>
<feature type="helix" evidence="8">
    <location>
        <begin position="217"/>
        <end position="240"/>
    </location>
</feature>
<feature type="turn" evidence="8">
    <location>
        <begin position="351"/>
        <end position="353"/>
    </location>
</feature>
<feature type="strand" evidence="8">
    <location>
        <begin position="370"/>
        <end position="372"/>
    </location>
</feature>
<feature type="strand" evidence="8">
    <location>
        <begin position="387"/>
        <end position="400"/>
    </location>
</feature>
<feature type="helix" evidence="8">
    <location>
        <begin position="403"/>
        <end position="413"/>
    </location>
</feature>
<feature type="strand" evidence="8">
    <location>
        <begin position="418"/>
        <end position="420"/>
    </location>
</feature>
<feature type="strand" evidence="8">
    <location>
        <begin position="426"/>
        <end position="428"/>
    </location>
</feature>
<feature type="helix" evidence="8">
    <location>
        <begin position="431"/>
        <end position="455"/>
    </location>
</feature>
<feature type="turn" evidence="8">
    <location>
        <begin position="456"/>
        <end position="458"/>
    </location>
</feature>
<feature type="helix" evidence="8">
    <location>
        <begin position="461"/>
        <end position="464"/>
    </location>
</feature>
<feature type="strand" evidence="8">
    <location>
        <begin position="469"/>
        <end position="474"/>
    </location>
</feature>
<feature type="turn" evidence="8">
    <location>
        <begin position="475"/>
        <end position="478"/>
    </location>
</feature>
<feature type="turn" evidence="8">
    <location>
        <begin position="483"/>
        <end position="485"/>
    </location>
</feature>
<feature type="turn" evidence="8">
    <location>
        <begin position="487"/>
        <end position="489"/>
    </location>
</feature>
<feature type="turn" evidence="8">
    <location>
        <begin position="491"/>
        <end position="493"/>
    </location>
</feature>
<feature type="helix" evidence="8">
    <location>
        <begin position="523"/>
        <end position="527"/>
    </location>
</feature>
<feature type="helix" evidence="8">
    <location>
        <begin position="614"/>
        <end position="617"/>
    </location>
</feature>
<feature type="strand" evidence="8">
    <location>
        <begin position="693"/>
        <end position="696"/>
    </location>
</feature>
<feature type="strand" evidence="8">
    <location>
        <begin position="699"/>
        <end position="701"/>
    </location>
</feature>
<feature type="helix" evidence="8">
    <location>
        <begin position="708"/>
        <end position="711"/>
    </location>
</feature>
<feature type="helix" evidence="8">
    <location>
        <begin position="1128"/>
        <end position="1140"/>
    </location>
</feature>
<feature type="turn" evidence="8">
    <location>
        <begin position="1141"/>
        <end position="1144"/>
    </location>
</feature>
<feature type="turn" evidence="8">
    <location>
        <begin position="1148"/>
        <end position="1150"/>
    </location>
</feature>
<feature type="helix" evidence="8">
    <location>
        <begin position="1153"/>
        <end position="1161"/>
    </location>
</feature>
<feature type="helix" evidence="8">
    <location>
        <begin position="1170"/>
        <end position="1178"/>
    </location>
</feature>
<feature type="helix" evidence="8">
    <location>
        <begin position="1189"/>
        <end position="1197"/>
    </location>
</feature>
<feature type="helix" evidence="8">
    <location>
        <begin position="1216"/>
        <end position="1220"/>
    </location>
</feature>
<feature type="helix" evidence="8">
    <location>
        <begin position="1233"/>
        <end position="1247"/>
    </location>
</feature>
<feature type="helix" evidence="8">
    <location>
        <begin position="1287"/>
        <end position="1303"/>
    </location>
</feature>
<feature type="helix" evidence="8">
    <location>
        <begin position="1421"/>
        <end position="1423"/>
    </location>
</feature>
<feature type="helix" evidence="8">
    <location>
        <begin position="1424"/>
        <end position="1432"/>
    </location>
</feature>
<feature type="helix" evidence="8">
    <location>
        <begin position="1439"/>
        <end position="1442"/>
    </location>
</feature>
<feature type="turn" evidence="8">
    <location>
        <begin position="1443"/>
        <end position="1445"/>
    </location>
</feature>
<feature type="helix" evidence="8">
    <location>
        <begin position="1534"/>
        <end position="1540"/>
    </location>
</feature>
<feature type="helix" evidence="8">
    <location>
        <begin position="1541"/>
        <end position="1543"/>
    </location>
</feature>
<feature type="strand" evidence="8">
    <location>
        <begin position="1545"/>
        <end position="1550"/>
    </location>
</feature>
<feature type="strand" evidence="8">
    <location>
        <begin position="1605"/>
        <end position="1615"/>
    </location>
</feature>
<feature type="helix" evidence="8">
    <location>
        <begin position="1623"/>
        <end position="1636"/>
    </location>
</feature>
<feature type="helix" evidence="8">
    <location>
        <begin position="1682"/>
        <end position="1684"/>
    </location>
</feature>
<feature type="helix" evidence="8">
    <location>
        <begin position="1688"/>
        <end position="1700"/>
    </location>
</feature>
<feature type="helix" evidence="8">
    <location>
        <begin position="1736"/>
        <end position="1744"/>
    </location>
</feature>
<feature type="turn" evidence="8">
    <location>
        <begin position="1745"/>
        <end position="1747"/>
    </location>
</feature>
<feature type="helix" evidence="8">
    <location>
        <begin position="1750"/>
        <end position="1762"/>
    </location>
</feature>
<feature type="strand" evidence="8">
    <location>
        <begin position="1764"/>
        <end position="1770"/>
    </location>
</feature>
<feature type="helix" evidence="8">
    <location>
        <begin position="1773"/>
        <end position="1776"/>
    </location>
</feature>
<proteinExistence type="evidence at protein level"/>
<comment type="function">
    <text evidence="3">Involved in protein precursor import into chloroplasts. May be part of an intermediate translocation complex acting as a protein-conducting channel at the inner envelope.</text>
</comment>
<comment type="subunit">
    <text evidence="1 3">Part of the Tic complex. Component of the 1-MD complex, composed of TIC20-I, TIC214, TIC100 and TIC56. Interacts with the translocating preproteins. Hydrolysis of ATP is essential for the formation of this complex (PubMed:23372012). The 1-MD complex interacts with TIC21 (By similarity).</text>
</comment>
<comment type="subcellular location">
    <subcellularLocation>
        <location evidence="3">Plastid</location>
        <location evidence="3">Chloroplast inner membrane</location>
        <topology evidence="2">Multi-pass membrane protein</topology>
    </subcellularLocation>
</comment>
<comment type="miscellaneous">
    <text>There is a partial copy of the N-terminus (positions 1-343) of ycf1 in the inverted repeat (ycf1-A, BAA84433).</text>
</comment>
<comment type="similarity">
    <text evidence="5">Belongs to the TIC214 family.</text>
</comment>
<dbReference type="EMBL" id="AP000423">
    <property type="protein sequence ID" value="BAA84433.1"/>
    <property type="molecule type" value="Genomic_DNA"/>
</dbReference>
<dbReference type="EMBL" id="AP000423">
    <property type="protein sequence ID" value="BAA84445.1"/>
    <property type="molecule type" value="Genomic_DNA"/>
</dbReference>
<dbReference type="PDB" id="8Z9Y">
    <property type="method" value="EM"/>
    <property type="resolution" value="2.50 A"/>
    <property type="chains" value="A=1-1786"/>
</dbReference>
<dbReference type="PDBsum" id="8Z9Y"/>
<dbReference type="EMDB" id="EMD-39872"/>
<dbReference type="SMR" id="P56785"/>
<dbReference type="BioGRID" id="29918">
    <property type="interactions" value="2"/>
</dbReference>
<dbReference type="IntAct" id="P56785">
    <property type="interactions" value="1"/>
</dbReference>
<dbReference type="STRING" id="3702.P56785"/>
<dbReference type="TCDB" id="3.A.9.1.2">
    <property type="family name" value="the chloroplast envelope protein translocase (cept or tic-toc) family"/>
</dbReference>
<dbReference type="iPTMnet" id="P56785"/>
<dbReference type="PaxDb" id="3702-ATCG01130.1"/>
<dbReference type="PeptideAtlas" id="P56785"/>
<dbReference type="ProteomicsDB" id="246489"/>
<dbReference type="KEGG" id="ath:ArthCp070"/>
<dbReference type="KEGG" id="ath:Arthcp087"/>
<dbReference type="Araport" id="ATCG01000"/>
<dbReference type="Araport" id="ATCG01130"/>
<dbReference type="TAIR" id="ATCG01000"/>
<dbReference type="TAIR" id="ATCG01130"/>
<dbReference type="eggNOG" id="ENOG502QSDY">
    <property type="taxonomic scope" value="Eukaryota"/>
</dbReference>
<dbReference type="HOGENOM" id="CLU_238474_0_0_1"/>
<dbReference type="InParanoid" id="P56785"/>
<dbReference type="PRO" id="PR:P56785"/>
<dbReference type="Proteomes" id="UP000006548">
    <property type="component" value="Chloroplast Pltd"/>
</dbReference>
<dbReference type="ExpressionAtlas" id="P56785">
    <property type="expression patterns" value="baseline and differential"/>
</dbReference>
<dbReference type="GO" id="GO:0009706">
    <property type="term" value="C:chloroplast inner membrane"/>
    <property type="evidence" value="ECO:0000314"/>
    <property type="project" value="UniProtKB"/>
</dbReference>
<dbReference type="GO" id="GO:0045037">
    <property type="term" value="P:protein import into chloroplast stroma"/>
    <property type="evidence" value="ECO:0000314"/>
    <property type="project" value="GO_Central"/>
</dbReference>
<dbReference type="InterPro" id="IPR008896">
    <property type="entry name" value="TIC214"/>
</dbReference>
<dbReference type="PANTHER" id="PTHR33163:SF40">
    <property type="entry name" value="PROTEIN TIC 214"/>
    <property type="match status" value="1"/>
</dbReference>
<dbReference type="PANTHER" id="PTHR33163">
    <property type="entry name" value="PROTEIN TIC 214-RELATED"/>
    <property type="match status" value="1"/>
</dbReference>
<dbReference type="Pfam" id="PF05758">
    <property type="entry name" value="Ycf1"/>
    <property type="match status" value="1"/>
</dbReference>
<sequence length="1786" mass="213728">MMVFQSFILGNLVSLCMKIINSVVVVGLYYGFLTTFSIGPSYLFLLRARVMDEGEEGTEKKVSATTGFIAGQLMMFISIYYAPLHLALGRPHTITVLALPYLLFHFFWNNHKHFFDYGSTTRNEMRNLRIQCVFLNNLIFQLFNHFILPSSMLARLVNIYMFRCNNKMLFVTSSFVGWLIGHILFMKWVGLVLVWIQQNNSIRSNVVIRSNKYKFLVSELRNSMARIFSILLFITCVYYLGRIPSPIFTKKLKGTSETGGTKQDQEVSTEEAPFPSLFSEEGEDLDKIDEMEEIRVNGKDKINKDDEFHVRTYYNYKTVSENLYGNKENSNLEFFKIKKKEDHFLWFEKPFVTLVFDYKRWNRPNRYIKNDKIENIVRNEMSQYFFYTCQSDGKERISFTYPPNLSTFFEMIQKRIPSFTKEKKTFDQVSTYWSLIHEEKRENLKKEFLNRIEALDKEWSVENILEKTTRFCYNEAKKEYLPKIYDPFLHGISRGRIKKLPPFQIITETYRKNNLGGSWINKIHGLLLKINYKKFEQTIEKFNRKSLSIEKKLSFFSEPQQEEKINSEEEIKTFKFLFDIVRTDSNDQTLIKNFMDFPEINKKVPRWSYKLISELEELEGENEENVPMEPGIRSRKAKRVVVFTDKEPHGEIYTNLKDNQNSDQNDEMALIRYSQQSDFRREIIKGSMRSQRRKTVIWEFFQAKVHSPLFFDRIDKLFFFSFDIWGLKKKIIKNFIWKKKIDKKEEEQSKREETRRIEIAETWDSFLFAQIIRGSLLVTQSILRKYIILPLLIIIKNSVRMLLFQFPEWSQDLKDWKREMHVKCTYNGVQLSETEFPRNWLTDGIQIKILFPFYLKPWHKSKFQASQKARLKKTKDKGEKNDFCFLTVWGMETELPFGSAQRKPSFFEPISKELKKRIKKLKKKSFVVLKIFKERAPIFLKVAKETKNWILKNFIFIKGISKRNLIPLFGPREIYELNEPKKDSIISNQMIHELSVQNKSLEWTNSSLSEKKIKNLIDRKKTIRNQIEEISKEKQNLTNSCTKLRYDSKIIESSKKIWQTFKRKNTRLIRKSIFFFKFCIEQMSIAIFLGIINIPRITTQLFFESTKKILDKYIYKNEENGEKKKNTLYFISTIKNLISNKKKMSYDLCSLSQAYVFYKLSQIKVSNFCKLKAVLEYNICITSFFVKNKIKVFFQEHGIFHYELKNKTFLNSEVNQWKNWLRSQYQYNLPQISWARLVTQNWKNKINKDSLVLNPSLTKEDSYEKKKFDNYKKQKFFEADSLLNPKHNVKKDSIYNLFCYKSIHSTEKNFDMSIGIALDNCLVSSFLEKYNIRGMGEIRHRKYLDWRILNFWFTKKVTIEPWVDTKSKKKYINTKVQNYQKIDKITQTDLANKKRNFFDWMGMNEEILNQRITNFEFFFFPEFFLFSSTYKMKPWVIPIKLLLLNFNENINVNKKIIRKKKGFIPSNEKESLRFYNLNKEEKESAGQVELESDKETKRNPEAARLNQEKNIEENFAESTIKKRKNKKQYKSNTEAELDLFLTRYSRFQLRWNCFFNQKILNNVKVYCLLVRLNNPNEIAVSSIERGEMSLDILMIEKNFTFAKLMKKGILIIEPVRLSVQNDGQLIIYRTIGISLVHKNKHKISKRYKKKSYINKKFFEKSITKYQNKTVNKKKNNYDFFVPEKILSPKRRREFRILICFNLKKKNARDTNSRFDKNIQNLTTVLHKKKDLDLDKDKNNLINLKSFLWPNFKLEDLACMNRYWFNTTNGNHFSMIRIRMYTRFPIP</sequence>
<name>TI214_ARATH</name>